<name>RL2_XANOR</name>
<accession>Q5GWT7</accession>
<protein>
    <recommendedName>
        <fullName evidence="1">Large ribosomal subunit protein uL2</fullName>
    </recommendedName>
    <alternativeName>
        <fullName evidence="3">50S ribosomal protein L2</fullName>
    </alternativeName>
</protein>
<proteinExistence type="inferred from homology"/>
<organism>
    <name type="scientific">Xanthomonas oryzae pv. oryzae (strain KACC10331 / KXO85)</name>
    <dbReference type="NCBI Taxonomy" id="291331"/>
    <lineage>
        <taxon>Bacteria</taxon>
        <taxon>Pseudomonadati</taxon>
        <taxon>Pseudomonadota</taxon>
        <taxon>Gammaproteobacteria</taxon>
        <taxon>Lysobacterales</taxon>
        <taxon>Lysobacteraceae</taxon>
        <taxon>Xanthomonas</taxon>
    </lineage>
</organism>
<sequence>MPLMKFKPTSPGRRSAVRVVTPDLHKGAPHAALLDSQSKSGGRNHHGRITVRHVGGGHKQHYRIIDFKRNKEGIPARVERIEYDPNRTAHIALLCYVDGERCYIIAPKGLKAGDQVIAGANAPIKTGNTLPLRNIPVGTTVHGIELKPGKGAQIARAAGAAVQLVAREGIYATLRLRSGEMRKVPVECRATIGEVGNDEHNLEKLGKAGAKRWRGVRPTVRGAAMNPVDHPHGGGEAKAGQGNPHPVTPWGVPTKGYKTRKNKRTQQFIVRDRRG</sequence>
<keyword id="KW-1185">Reference proteome</keyword>
<keyword id="KW-0687">Ribonucleoprotein</keyword>
<keyword id="KW-0689">Ribosomal protein</keyword>
<keyword id="KW-0694">RNA-binding</keyword>
<keyword id="KW-0699">rRNA-binding</keyword>
<gene>
    <name evidence="1" type="primary">rplB</name>
    <name type="ordered locus">XOO3580</name>
</gene>
<reference key="1">
    <citation type="journal article" date="2005" name="Nucleic Acids Res.">
        <title>The genome sequence of Xanthomonas oryzae pathovar oryzae KACC10331, the bacterial blight pathogen of rice.</title>
        <authorList>
            <person name="Lee B.-M."/>
            <person name="Park Y.-J."/>
            <person name="Park D.-S."/>
            <person name="Kang H.-W."/>
            <person name="Kim J.-G."/>
            <person name="Song E.-S."/>
            <person name="Park I.-C."/>
            <person name="Yoon U.-H."/>
            <person name="Hahn J.-H."/>
            <person name="Koo B.-S."/>
            <person name="Lee G.-B."/>
            <person name="Kim H."/>
            <person name="Park H.-S."/>
            <person name="Yoon K.-O."/>
            <person name="Kim J.-H."/>
            <person name="Jung C.-H."/>
            <person name="Koh N.-H."/>
            <person name="Seo J.-S."/>
            <person name="Go S.-J."/>
        </authorList>
    </citation>
    <scope>NUCLEOTIDE SEQUENCE [LARGE SCALE GENOMIC DNA]</scope>
    <source>
        <strain>KACC10331 / KXO85</strain>
    </source>
</reference>
<comment type="function">
    <text evidence="1">One of the primary rRNA binding proteins. Required for association of the 30S and 50S subunits to form the 70S ribosome, for tRNA binding and peptide bond formation. It has been suggested to have peptidyltransferase activity; this is somewhat controversial. Makes several contacts with the 16S rRNA in the 70S ribosome.</text>
</comment>
<comment type="subunit">
    <text evidence="1">Part of the 50S ribosomal subunit. Forms a bridge to the 30S subunit in the 70S ribosome.</text>
</comment>
<comment type="similarity">
    <text evidence="1">Belongs to the universal ribosomal protein uL2 family.</text>
</comment>
<evidence type="ECO:0000255" key="1">
    <source>
        <dbReference type="HAMAP-Rule" id="MF_01320"/>
    </source>
</evidence>
<evidence type="ECO:0000256" key="2">
    <source>
        <dbReference type="SAM" id="MobiDB-lite"/>
    </source>
</evidence>
<evidence type="ECO:0000305" key="3"/>
<dbReference type="EMBL" id="AE013598">
    <property type="protein sequence ID" value="AAW76834.1"/>
    <property type="molecule type" value="Genomic_DNA"/>
</dbReference>
<dbReference type="SMR" id="Q5GWT7"/>
<dbReference type="STRING" id="291331.XOO3580"/>
<dbReference type="KEGG" id="xoo:XOO3580"/>
<dbReference type="HOGENOM" id="CLU_036235_2_1_6"/>
<dbReference type="Proteomes" id="UP000006735">
    <property type="component" value="Chromosome"/>
</dbReference>
<dbReference type="GO" id="GO:0015934">
    <property type="term" value="C:large ribosomal subunit"/>
    <property type="evidence" value="ECO:0007669"/>
    <property type="project" value="InterPro"/>
</dbReference>
<dbReference type="GO" id="GO:0019843">
    <property type="term" value="F:rRNA binding"/>
    <property type="evidence" value="ECO:0007669"/>
    <property type="project" value="UniProtKB-UniRule"/>
</dbReference>
<dbReference type="GO" id="GO:0003735">
    <property type="term" value="F:structural constituent of ribosome"/>
    <property type="evidence" value="ECO:0007669"/>
    <property type="project" value="InterPro"/>
</dbReference>
<dbReference type="GO" id="GO:0016740">
    <property type="term" value="F:transferase activity"/>
    <property type="evidence" value="ECO:0007669"/>
    <property type="project" value="InterPro"/>
</dbReference>
<dbReference type="GO" id="GO:0002181">
    <property type="term" value="P:cytoplasmic translation"/>
    <property type="evidence" value="ECO:0007669"/>
    <property type="project" value="TreeGrafter"/>
</dbReference>
<dbReference type="FunFam" id="2.30.30.30:FF:000001">
    <property type="entry name" value="50S ribosomal protein L2"/>
    <property type="match status" value="1"/>
</dbReference>
<dbReference type="FunFam" id="2.40.50.140:FF:000003">
    <property type="entry name" value="50S ribosomal protein L2"/>
    <property type="match status" value="1"/>
</dbReference>
<dbReference type="FunFam" id="4.10.950.10:FF:000001">
    <property type="entry name" value="50S ribosomal protein L2"/>
    <property type="match status" value="1"/>
</dbReference>
<dbReference type="Gene3D" id="2.30.30.30">
    <property type="match status" value="1"/>
</dbReference>
<dbReference type="Gene3D" id="2.40.50.140">
    <property type="entry name" value="Nucleic acid-binding proteins"/>
    <property type="match status" value="1"/>
</dbReference>
<dbReference type="Gene3D" id="4.10.950.10">
    <property type="entry name" value="Ribosomal protein L2, domain 3"/>
    <property type="match status" value="1"/>
</dbReference>
<dbReference type="HAMAP" id="MF_01320_B">
    <property type="entry name" value="Ribosomal_uL2_B"/>
    <property type="match status" value="1"/>
</dbReference>
<dbReference type="InterPro" id="IPR012340">
    <property type="entry name" value="NA-bd_OB-fold"/>
</dbReference>
<dbReference type="InterPro" id="IPR014722">
    <property type="entry name" value="Rib_uL2_dom2"/>
</dbReference>
<dbReference type="InterPro" id="IPR002171">
    <property type="entry name" value="Ribosomal_uL2"/>
</dbReference>
<dbReference type="InterPro" id="IPR005880">
    <property type="entry name" value="Ribosomal_uL2_bac/org-type"/>
</dbReference>
<dbReference type="InterPro" id="IPR022669">
    <property type="entry name" value="Ribosomal_uL2_C"/>
</dbReference>
<dbReference type="InterPro" id="IPR022671">
    <property type="entry name" value="Ribosomal_uL2_CS"/>
</dbReference>
<dbReference type="InterPro" id="IPR014726">
    <property type="entry name" value="Ribosomal_uL2_dom3"/>
</dbReference>
<dbReference type="InterPro" id="IPR022666">
    <property type="entry name" value="Ribosomal_uL2_RNA-bd_dom"/>
</dbReference>
<dbReference type="InterPro" id="IPR008991">
    <property type="entry name" value="Translation_prot_SH3-like_sf"/>
</dbReference>
<dbReference type="NCBIfam" id="TIGR01171">
    <property type="entry name" value="rplB_bact"/>
    <property type="match status" value="1"/>
</dbReference>
<dbReference type="PANTHER" id="PTHR13691:SF5">
    <property type="entry name" value="LARGE RIBOSOMAL SUBUNIT PROTEIN UL2M"/>
    <property type="match status" value="1"/>
</dbReference>
<dbReference type="PANTHER" id="PTHR13691">
    <property type="entry name" value="RIBOSOMAL PROTEIN L2"/>
    <property type="match status" value="1"/>
</dbReference>
<dbReference type="Pfam" id="PF00181">
    <property type="entry name" value="Ribosomal_L2"/>
    <property type="match status" value="1"/>
</dbReference>
<dbReference type="Pfam" id="PF03947">
    <property type="entry name" value="Ribosomal_L2_C"/>
    <property type="match status" value="1"/>
</dbReference>
<dbReference type="PIRSF" id="PIRSF002158">
    <property type="entry name" value="Ribosomal_L2"/>
    <property type="match status" value="1"/>
</dbReference>
<dbReference type="SMART" id="SM01383">
    <property type="entry name" value="Ribosomal_L2"/>
    <property type="match status" value="1"/>
</dbReference>
<dbReference type="SMART" id="SM01382">
    <property type="entry name" value="Ribosomal_L2_C"/>
    <property type="match status" value="1"/>
</dbReference>
<dbReference type="SUPFAM" id="SSF50249">
    <property type="entry name" value="Nucleic acid-binding proteins"/>
    <property type="match status" value="1"/>
</dbReference>
<dbReference type="SUPFAM" id="SSF50104">
    <property type="entry name" value="Translation proteins SH3-like domain"/>
    <property type="match status" value="1"/>
</dbReference>
<dbReference type="PROSITE" id="PS00467">
    <property type="entry name" value="RIBOSOMAL_L2"/>
    <property type="match status" value="1"/>
</dbReference>
<feature type="chain" id="PRO_0000237269" description="Large ribosomal subunit protein uL2">
    <location>
        <begin position="1"/>
        <end position="275"/>
    </location>
</feature>
<feature type="region of interest" description="Disordered" evidence="2">
    <location>
        <begin position="224"/>
        <end position="275"/>
    </location>
</feature>